<feature type="transit peptide" description="Mitochondrion" evidence="1">
    <location>
        <begin position="1"/>
        <end position="22"/>
    </location>
</feature>
<feature type="chain" id="PRO_0000383170" description="Succinate dehydrogenase assembly factor 2-B, mitochondrial">
    <location>
        <begin position="23"/>
        <end position="157"/>
    </location>
</feature>
<reference key="1">
    <citation type="journal article" date="2007" name="Nature">
        <title>Evolution of genes and genomes on the Drosophila phylogeny.</title>
        <authorList>
            <consortium name="Drosophila 12 genomes consortium"/>
        </authorList>
    </citation>
    <scope>NUCLEOTIDE SEQUENCE [LARGE SCALE GENOMIC DNA]</scope>
    <source>
        <strain>Tucson 15081-1352.22</strain>
    </source>
</reference>
<protein>
    <recommendedName>
        <fullName evidence="1">Succinate dehydrogenase assembly factor 2-B, mitochondrial</fullName>
        <shortName evidence="1">SDH assembly factor 2-B</shortName>
        <shortName evidence="1">SDHAF2-B</shortName>
    </recommendedName>
</protein>
<evidence type="ECO:0000255" key="1">
    <source>
        <dbReference type="HAMAP-Rule" id="MF_03057"/>
    </source>
</evidence>
<gene>
    <name type="ORF">GI20928</name>
</gene>
<dbReference type="EMBL" id="CH933808">
    <property type="protein sequence ID" value="EDW10164.1"/>
    <property type="molecule type" value="Genomic_DNA"/>
</dbReference>
<dbReference type="SMR" id="B4KPG8"/>
<dbReference type="FunCoup" id="B4KPG8">
    <property type="interactions" value="1274"/>
</dbReference>
<dbReference type="EnsemblMetazoa" id="FBtr0171653">
    <property type="protein sequence ID" value="FBpp0170145"/>
    <property type="gene ID" value="FBgn0143662"/>
</dbReference>
<dbReference type="EnsemblMetazoa" id="XM_002006193.4">
    <property type="protein sequence ID" value="XP_002006229.1"/>
    <property type="gene ID" value="LOC6580383"/>
</dbReference>
<dbReference type="GeneID" id="6580383"/>
<dbReference type="KEGG" id="dmo:Dmoj_GI20928"/>
<dbReference type="eggNOG" id="KOG3326">
    <property type="taxonomic scope" value="Eukaryota"/>
</dbReference>
<dbReference type="HOGENOM" id="CLU_103054_0_3_1"/>
<dbReference type="InParanoid" id="B4KPG8"/>
<dbReference type="OMA" id="DTEIMRM"/>
<dbReference type="OrthoDB" id="284292at2759"/>
<dbReference type="PhylomeDB" id="B4KPG8"/>
<dbReference type="Proteomes" id="UP000009192">
    <property type="component" value="Unassembled WGS sequence"/>
</dbReference>
<dbReference type="GO" id="GO:0005759">
    <property type="term" value="C:mitochondrial matrix"/>
    <property type="evidence" value="ECO:0007669"/>
    <property type="project" value="UniProtKB-SubCell"/>
</dbReference>
<dbReference type="GO" id="GO:0005739">
    <property type="term" value="C:mitochondrion"/>
    <property type="evidence" value="ECO:0000250"/>
    <property type="project" value="UniProtKB"/>
</dbReference>
<dbReference type="GO" id="GO:0055070">
    <property type="term" value="P:copper ion homeostasis"/>
    <property type="evidence" value="ECO:0007669"/>
    <property type="project" value="EnsemblMetazoa"/>
</dbReference>
<dbReference type="GO" id="GO:0006121">
    <property type="term" value="P:mitochondrial electron transport, succinate to ubiquinone"/>
    <property type="evidence" value="ECO:0000250"/>
    <property type="project" value="UniProtKB"/>
</dbReference>
<dbReference type="GO" id="GO:0034553">
    <property type="term" value="P:mitochondrial respiratory chain complex II assembly"/>
    <property type="evidence" value="ECO:0007669"/>
    <property type="project" value="TreeGrafter"/>
</dbReference>
<dbReference type="GO" id="GO:0018293">
    <property type="term" value="P:protein-FAD linkage"/>
    <property type="evidence" value="ECO:0000250"/>
    <property type="project" value="UniProtKB"/>
</dbReference>
<dbReference type="GO" id="GO:0006099">
    <property type="term" value="P:tricarboxylic acid cycle"/>
    <property type="evidence" value="ECO:0007669"/>
    <property type="project" value="TreeGrafter"/>
</dbReference>
<dbReference type="FunFam" id="1.10.150.250:FF:000002">
    <property type="entry name" value="Succinate dehydrogenase assembly factor 2, mitochondrial"/>
    <property type="match status" value="1"/>
</dbReference>
<dbReference type="Gene3D" id="1.10.150.250">
    <property type="entry name" value="Flavinator of succinate dehydrogenase"/>
    <property type="match status" value="1"/>
</dbReference>
<dbReference type="HAMAP" id="MF_03057">
    <property type="entry name" value="SDHAF2"/>
    <property type="match status" value="1"/>
</dbReference>
<dbReference type="InterPro" id="IPR005631">
    <property type="entry name" value="SDH"/>
</dbReference>
<dbReference type="InterPro" id="IPR036714">
    <property type="entry name" value="SDH_sf"/>
</dbReference>
<dbReference type="InterPro" id="IPR028882">
    <property type="entry name" value="SDHAF2"/>
</dbReference>
<dbReference type="PANTHER" id="PTHR12469">
    <property type="entry name" value="PROTEIN EMI5 HOMOLOG, MITOCHONDRIAL"/>
    <property type="match status" value="1"/>
</dbReference>
<dbReference type="PANTHER" id="PTHR12469:SF2">
    <property type="entry name" value="SUCCINATE DEHYDROGENASE ASSEMBLY FACTOR 2, MITOCHONDRIAL"/>
    <property type="match status" value="1"/>
</dbReference>
<dbReference type="Pfam" id="PF03937">
    <property type="entry name" value="Sdh5"/>
    <property type="match status" value="1"/>
</dbReference>
<dbReference type="SUPFAM" id="SSF109910">
    <property type="entry name" value="YgfY-like"/>
    <property type="match status" value="1"/>
</dbReference>
<proteinExistence type="inferred from homology"/>
<organism>
    <name type="scientific">Drosophila mojavensis</name>
    <name type="common">Fruit fly</name>
    <dbReference type="NCBI Taxonomy" id="7230"/>
    <lineage>
        <taxon>Eukaryota</taxon>
        <taxon>Metazoa</taxon>
        <taxon>Ecdysozoa</taxon>
        <taxon>Arthropoda</taxon>
        <taxon>Hexapoda</taxon>
        <taxon>Insecta</taxon>
        <taxon>Pterygota</taxon>
        <taxon>Neoptera</taxon>
        <taxon>Endopterygota</taxon>
        <taxon>Diptera</taxon>
        <taxon>Brachycera</taxon>
        <taxon>Muscomorpha</taxon>
        <taxon>Ephydroidea</taxon>
        <taxon>Drosophilidae</taxon>
        <taxon>Drosophila</taxon>
    </lineage>
</organism>
<name>SDF2B_DROMO</name>
<accession>B4KPG8</accession>
<sequence length="157" mass="18743">MLSQWFRGRHLVVRSALFSRRRVSSESTSTKDDVIVDFEDPDLPLPEYPKRPDEPLETRKQRLMYQSRKRGMLENDLLLSTFAHKYLKDFNAEQTALYDDLINGVSNDWDIYYWATGVKQTPKEYDTEIMKLLKLHVDNAERVTRFRQPELTYYLKC</sequence>
<keyword id="KW-0143">Chaperone</keyword>
<keyword id="KW-0496">Mitochondrion</keyword>
<keyword id="KW-1185">Reference proteome</keyword>
<keyword id="KW-0809">Transit peptide</keyword>
<comment type="function">
    <text evidence="1">Plays an essential role in the assembly of succinate dehydrogenase (SDH), an enzyme complex (also referred to as respiratory complex II) that is a component of both the tricarboxylic acid (TCA) cycle and the mitochondrial electron transport chain, and which couples the oxidation of succinate to fumarate with the reduction of ubiquinone (coenzyme Q) to ubiquinol. Required for flavinylation (covalent attachment of FAD) of the flavoprotein subunit of the SDH catalytic dimer.</text>
</comment>
<comment type="subunit">
    <text evidence="1">Interacts with the flavoprotein subunit within the SDH catalytic dimer.</text>
</comment>
<comment type="subcellular location">
    <subcellularLocation>
        <location evidence="1">Mitochondrion matrix</location>
    </subcellularLocation>
</comment>
<comment type="similarity">
    <text evidence="1">Belongs to the SDHAF2 family.</text>
</comment>